<organismHost>
    <name type="scientific">Staphylococcus</name>
    <dbReference type="NCBI Taxonomy" id="1279"/>
</organismHost>
<dbReference type="EC" id="2.7.7.-" evidence="1"/>
<dbReference type="EC" id="3.1.-.-" evidence="1"/>
<dbReference type="EMBL" id="M27965">
    <property type="protein sequence ID" value="AAA98161.1"/>
    <property type="molecule type" value="Genomic_DNA"/>
</dbReference>
<dbReference type="SMR" id="P20709"/>
<dbReference type="GO" id="GO:0003677">
    <property type="term" value="F:DNA binding"/>
    <property type="evidence" value="ECO:0007669"/>
    <property type="project" value="UniProtKB-KW"/>
</dbReference>
<dbReference type="GO" id="GO:0016787">
    <property type="term" value="F:hydrolase activity"/>
    <property type="evidence" value="ECO:0007669"/>
    <property type="project" value="UniProtKB-KW"/>
</dbReference>
<dbReference type="GO" id="GO:0016740">
    <property type="term" value="F:transferase activity"/>
    <property type="evidence" value="ECO:0007669"/>
    <property type="project" value="UniProtKB-KW"/>
</dbReference>
<dbReference type="GO" id="GO:0015074">
    <property type="term" value="P:DNA integration"/>
    <property type="evidence" value="ECO:0007669"/>
    <property type="project" value="UniProtKB-KW"/>
</dbReference>
<dbReference type="GO" id="GO:0006310">
    <property type="term" value="P:DNA recombination"/>
    <property type="evidence" value="ECO:0007669"/>
    <property type="project" value="UniProtKB-KW"/>
</dbReference>
<dbReference type="GO" id="GO:0075713">
    <property type="term" value="P:establishment of integrated proviral latency"/>
    <property type="evidence" value="ECO:0007669"/>
    <property type="project" value="UniProtKB-KW"/>
</dbReference>
<dbReference type="GO" id="GO:0046718">
    <property type="term" value="P:symbiont entry into host cell"/>
    <property type="evidence" value="ECO:0007669"/>
    <property type="project" value="UniProtKB-KW"/>
</dbReference>
<dbReference type="GO" id="GO:0044826">
    <property type="term" value="P:viral genome integration into host DNA"/>
    <property type="evidence" value="ECO:0007669"/>
    <property type="project" value="UniProtKB-KW"/>
</dbReference>
<dbReference type="CDD" id="cd01189">
    <property type="entry name" value="INT_ICEBs1_C_like"/>
    <property type="match status" value="1"/>
</dbReference>
<dbReference type="Gene3D" id="1.10.150.130">
    <property type="match status" value="1"/>
</dbReference>
<dbReference type="Gene3D" id="1.10.443.10">
    <property type="entry name" value="Intergrase catalytic core"/>
    <property type="match status" value="1"/>
</dbReference>
<dbReference type="InterPro" id="IPR044068">
    <property type="entry name" value="CB"/>
</dbReference>
<dbReference type="InterPro" id="IPR011010">
    <property type="entry name" value="DNA_brk_join_enz"/>
</dbReference>
<dbReference type="InterPro" id="IPR013762">
    <property type="entry name" value="Integrase-like_cat_sf"/>
</dbReference>
<dbReference type="InterPro" id="IPR002104">
    <property type="entry name" value="Integrase_catalytic"/>
</dbReference>
<dbReference type="InterPro" id="IPR010998">
    <property type="entry name" value="Integrase_recombinase_N"/>
</dbReference>
<dbReference type="InterPro" id="IPR050090">
    <property type="entry name" value="Tyrosine_recombinase_XerCD"/>
</dbReference>
<dbReference type="PANTHER" id="PTHR30349">
    <property type="entry name" value="PHAGE INTEGRASE-RELATED"/>
    <property type="match status" value="1"/>
</dbReference>
<dbReference type="PANTHER" id="PTHR30349:SF64">
    <property type="entry name" value="PROPHAGE INTEGRASE INTD-RELATED"/>
    <property type="match status" value="1"/>
</dbReference>
<dbReference type="Pfam" id="PF00589">
    <property type="entry name" value="Phage_integrase"/>
    <property type="match status" value="1"/>
</dbReference>
<dbReference type="SUPFAM" id="SSF56349">
    <property type="entry name" value="DNA breaking-rejoining enzymes"/>
    <property type="match status" value="1"/>
</dbReference>
<dbReference type="PROSITE" id="PS51900">
    <property type="entry name" value="CB"/>
    <property type="match status" value="1"/>
</dbReference>
<dbReference type="PROSITE" id="PS51898">
    <property type="entry name" value="TYR_RECOMBINASE"/>
    <property type="match status" value="1"/>
</dbReference>
<organism>
    <name type="scientific">Staphylococcus phage L54a</name>
    <name type="common">Bacteriophage L54a</name>
    <dbReference type="NCBI Taxonomy" id="10727"/>
    <lineage>
        <taxon>Viruses</taxon>
        <taxon>Duplodnaviria</taxon>
        <taxon>Heunggongvirae</taxon>
        <taxon>Uroviricota</taxon>
        <taxon>Caudoviricetes</taxon>
    </lineage>
</organism>
<proteinExistence type="inferred from homology"/>
<evidence type="ECO:0000250" key="1">
    <source>
        <dbReference type="UniProtKB" id="P03700"/>
    </source>
</evidence>
<evidence type="ECO:0000255" key="2">
    <source>
        <dbReference type="PROSITE-ProRule" id="PRU01246"/>
    </source>
</evidence>
<evidence type="ECO:0000255" key="3">
    <source>
        <dbReference type="PROSITE-ProRule" id="PRU01248"/>
    </source>
</evidence>
<evidence type="ECO:0000305" key="4"/>
<comment type="function">
    <text>Integrase is necessary for integration of the phage into the host genome by site-specific recombination. In conjunction with excisionase, integrase is also necessary for excision of the prophage from the host genome. It may bind the DNA.</text>
</comment>
<comment type="similarity">
    <text evidence="4">Belongs to the 'phage' integrase family.</text>
</comment>
<gene>
    <name type="primary">int</name>
</gene>
<sequence length="354" mass="41019">MFRLEEKIKEKLNNKSSSELKTLTFHALLDEWLEYHIKTSGFKVTTLDNLKTRIKNIKKNSSQNLLLNKIDTKYMQTFINELSNVYSANQVKRQLGHMKEAIKYAVKFYNYPNEHILNSVTLPKKSKTIEDIEKEEAKMYNYLEMEQVIQIRDFILNDNNMQYRARILVAGAVEVQALTGMRIGELLALQVKDVDLKNKTIAINGTIHRIKCNAGFGHKDTTKTAGSKRKIAINSRIANVLKKIMLENKKMQQWEPSYVDRGFIFTTCQGNPMQGSRINKRLSSAAESLNINKKVTTHTLRHTHISLLAEMNISLKAIMKRVGHRDEKTTIKVYTHVTEKMDRELEQKLEKLVY</sequence>
<accession>P20709</accession>
<reference key="1">
    <citation type="journal article" date="1989" name="J. Bacteriol.">
        <title>Nucleotide sequence and genetic characterization of staphylococcal bacteriophage L54a int and xis genes.</title>
        <authorList>
            <person name="Ye Z.-H."/>
            <person name="Lee C.Y."/>
        </authorList>
    </citation>
    <scope>NUCLEOTIDE SEQUENCE [GENOMIC DNA]</scope>
</reference>
<protein>
    <recommendedName>
        <fullName>Integrase</fullName>
        <ecNumber evidence="1">2.7.7.-</ecNumber>
        <ecNumber evidence="1">3.1.-.-</ecNumber>
    </recommendedName>
</protein>
<keyword id="KW-0229">DNA integration</keyword>
<keyword id="KW-0233">DNA recombination</keyword>
<keyword id="KW-0238">DNA-binding</keyword>
<keyword id="KW-0378">Hydrolase</keyword>
<keyword id="KW-0808">Transferase</keyword>
<keyword id="KW-1179">Viral genome integration</keyword>
<keyword id="KW-1160">Virus entry into host cell</keyword>
<name>VINT_BPL54</name>
<feature type="chain" id="PRO_0000197524" description="Integrase">
    <location>
        <begin position="1"/>
        <end position="354"/>
    </location>
</feature>
<feature type="domain" description="Core-binding (CB)" evidence="3">
    <location>
        <begin position="23"/>
        <end position="106"/>
    </location>
</feature>
<feature type="domain" description="Tyr recombinase" evidence="2">
    <location>
        <begin position="138"/>
        <end position="347"/>
    </location>
</feature>
<feature type="active site" evidence="2">
    <location>
        <position position="182"/>
    </location>
</feature>
<feature type="active site" evidence="2">
    <location>
        <position position="298"/>
    </location>
</feature>
<feature type="active site" evidence="2">
    <location>
        <position position="301"/>
    </location>
</feature>
<feature type="active site" evidence="2">
    <location>
        <position position="324"/>
    </location>
</feature>
<feature type="active site" description="O-(3'-phospho-DNA)-tyrosine intermediate" evidence="2">
    <location>
        <position position="334"/>
    </location>
</feature>